<name>CYTC_MOUSE</name>
<keyword id="KW-0002">3D-structure</keyword>
<keyword id="KW-1015">Disulfide bond</keyword>
<keyword id="KW-0646">Protease inhibitor</keyword>
<keyword id="KW-1185">Reference proteome</keyword>
<keyword id="KW-0964">Secreted</keyword>
<keyword id="KW-0732">Signal</keyword>
<keyword id="KW-0789">Thiol protease inhibitor</keyword>
<organism>
    <name type="scientific">Mus musculus</name>
    <name type="common">Mouse</name>
    <dbReference type="NCBI Taxonomy" id="10090"/>
    <lineage>
        <taxon>Eukaryota</taxon>
        <taxon>Metazoa</taxon>
        <taxon>Chordata</taxon>
        <taxon>Craniata</taxon>
        <taxon>Vertebrata</taxon>
        <taxon>Euteleostomi</taxon>
        <taxon>Mammalia</taxon>
        <taxon>Eutheria</taxon>
        <taxon>Euarchontoglires</taxon>
        <taxon>Glires</taxon>
        <taxon>Rodentia</taxon>
        <taxon>Myomorpha</taxon>
        <taxon>Muroidea</taxon>
        <taxon>Muridae</taxon>
        <taxon>Murinae</taxon>
        <taxon>Mus</taxon>
        <taxon>Mus</taxon>
    </lineage>
</organism>
<reference key="1">
    <citation type="journal article" date="1990" name="Biochem. Biophys. Res. Commun.">
        <title>Transforming growth factor beta regulates cystatin C in serum-free mouse embryo (SFME) cells.</title>
        <authorList>
            <person name="Solem M."/>
            <person name="Rawson C."/>
            <person name="Lindburg K."/>
            <person name="Barnes D."/>
        </authorList>
    </citation>
    <scope>NUCLEOTIDE SEQUENCE [MRNA]</scope>
    <source>
        <strain>BALB/cJ</strain>
        <tissue>Brain</tissue>
    </source>
</reference>
<reference key="2">
    <citation type="journal article" date="1995" name="Gene">
        <title>Structural organization, expression and chromosomal mapping of the mouse cystatin-C-encoding gene (Cst3).</title>
        <authorList>
            <person name="Huh C."/>
            <person name="Nagle J.W."/>
            <person name="Kozak C.A."/>
            <person name="Abrahamson M."/>
            <person name="Karlsson S."/>
        </authorList>
    </citation>
    <scope>NUCLEOTIDE SEQUENCE [GENOMIC DNA]</scope>
    <source>
        <strain>129/Sv</strain>
        <tissue>Liver</tissue>
    </source>
</reference>
<reference key="3">
    <citation type="journal article" date="2001" name="Mamm. Genome">
        <title>High-throughput sequence identification of gene coding variants within alcohol-related QTLs.</title>
        <authorList>
            <person name="Ehringer M.A."/>
            <person name="Thompson J."/>
            <person name="Conroy O."/>
            <person name="Xu Y."/>
            <person name="Yang F."/>
            <person name="Canniff J."/>
            <person name="Beeson M."/>
            <person name="Gordon L."/>
            <person name="Bennett B."/>
            <person name="Johnson T.E."/>
            <person name="Sikela J.M."/>
        </authorList>
    </citation>
    <scope>NUCLEOTIDE SEQUENCE [MRNA]</scope>
    <source>
        <strain>ILS</strain>
        <strain>ISS</strain>
    </source>
</reference>
<reference key="4">
    <citation type="journal article" date="2005" name="Science">
        <title>The transcriptional landscape of the mammalian genome.</title>
        <authorList>
            <person name="Carninci P."/>
            <person name="Kasukawa T."/>
            <person name="Katayama S."/>
            <person name="Gough J."/>
            <person name="Frith M.C."/>
            <person name="Maeda N."/>
            <person name="Oyama R."/>
            <person name="Ravasi T."/>
            <person name="Lenhard B."/>
            <person name="Wells C."/>
            <person name="Kodzius R."/>
            <person name="Shimokawa K."/>
            <person name="Bajic V.B."/>
            <person name="Brenner S.E."/>
            <person name="Batalov S."/>
            <person name="Forrest A.R."/>
            <person name="Zavolan M."/>
            <person name="Davis M.J."/>
            <person name="Wilming L.G."/>
            <person name="Aidinis V."/>
            <person name="Allen J.E."/>
            <person name="Ambesi-Impiombato A."/>
            <person name="Apweiler R."/>
            <person name="Aturaliya R.N."/>
            <person name="Bailey T.L."/>
            <person name="Bansal M."/>
            <person name="Baxter L."/>
            <person name="Beisel K.W."/>
            <person name="Bersano T."/>
            <person name="Bono H."/>
            <person name="Chalk A.M."/>
            <person name="Chiu K.P."/>
            <person name="Choudhary V."/>
            <person name="Christoffels A."/>
            <person name="Clutterbuck D.R."/>
            <person name="Crowe M.L."/>
            <person name="Dalla E."/>
            <person name="Dalrymple B.P."/>
            <person name="de Bono B."/>
            <person name="Della Gatta G."/>
            <person name="di Bernardo D."/>
            <person name="Down T."/>
            <person name="Engstrom P."/>
            <person name="Fagiolini M."/>
            <person name="Faulkner G."/>
            <person name="Fletcher C.F."/>
            <person name="Fukushima T."/>
            <person name="Furuno M."/>
            <person name="Futaki S."/>
            <person name="Gariboldi M."/>
            <person name="Georgii-Hemming P."/>
            <person name="Gingeras T.R."/>
            <person name="Gojobori T."/>
            <person name="Green R.E."/>
            <person name="Gustincich S."/>
            <person name="Harbers M."/>
            <person name="Hayashi Y."/>
            <person name="Hensch T.K."/>
            <person name="Hirokawa N."/>
            <person name="Hill D."/>
            <person name="Huminiecki L."/>
            <person name="Iacono M."/>
            <person name="Ikeo K."/>
            <person name="Iwama A."/>
            <person name="Ishikawa T."/>
            <person name="Jakt M."/>
            <person name="Kanapin A."/>
            <person name="Katoh M."/>
            <person name="Kawasawa Y."/>
            <person name="Kelso J."/>
            <person name="Kitamura H."/>
            <person name="Kitano H."/>
            <person name="Kollias G."/>
            <person name="Krishnan S.P."/>
            <person name="Kruger A."/>
            <person name="Kummerfeld S.K."/>
            <person name="Kurochkin I.V."/>
            <person name="Lareau L.F."/>
            <person name="Lazarevic D."/>
            <person name="Lipovich L."/>
            <person name="Liu J."/>
            <person name="Liuni S."/>
            <person name="McWilliam S."/>
            <person name="Madan Babu M."/>
            <person name="Madera M."/>
            <person name="Marchionni L."/>
            <person name="Matsuda H."/>
            <person name="Matsuzawa S."/>
            <person name="Miki H."/>
            <person name="Mignone F."/>
            <person name="Miyake S."/>
            <person name="Morris K."/>
            <person name="Mottagui-Tabar S."/>
            <person name="Mulder N."/>
            <person name="Nakano N."/>
            <person name="Nakauchi H."/>
            <person name="Ng P."/>
            <person name="Nilsson R."/>
            <person name="Nishiguchi S."/>
            <person name="Nishikawa S."/>
            <person name="Nori F."/>
            <person name="Ohara O."/>
            <person name="Okazaki Y."/>
            <person name="Orlando V."/>
            <person name="Pang K.C."/>
            <person name="Pavan W.J."/>
            <person name="Pavesi G."/>
            <person name="Pesole G."/>
            <person name="Petrovsky N."/>
            <person name="Piazza S."/>
            <person name="Reed J."/>
            <person name="Reid J.F."/>
            <person name="Ring B.Z."/>
            <person name="Ringwald M."/>
            <person name="Rost B."/>
            <person name="Ruan Y."/>
            <person name="Salzberg S.L."/>
            <person name="Sandelin A."/>
            <person name="Schneider C."/>
            <person name="Schoenbach C."/>
            <person name="Sekiguchi K."/>
            <person name="Semple C.A."/>
            <person name="Seno S."/>
            <person name="Sessa L."/>
            <person name="Sheng Y."/>
            <person name="Shibata Y."/>
            <person name="Shimada H."/>
            <person name="Shimada K."/>
            <person name="Silva D."/>
            <person name="Sinclair B."/>
            <person name="Sperling S."/>
            <person name="Stupka E."/>
            <person name="Sugiura K."/>
            <person name="Sultana R."/>
            <person name="Takenaka Y."/>
            <person name="Taki K."/>
            <person name="Tammoja K."/>
            <person name="Tan S.L."/>
            <person name="Tang S."/>
            <person name="Taylor M.S."/>
            <person name="Tegner J."/>
            <person name="Teichmann S.A."/>
            <person name="Ueda H.R."/>
            <person name="van Nimwegen E."/>
            <person name="Verardo R."/>
            <person name="Wei C.L."/>
            <person name="Yagi K."/>
            <person name="Yamanishi H."/>
            <person name="Zabarovsky E."/>
            <person name="Zhu S."/>
            <person name="Zimmer A."/>
            <person name="Hide W."/>
            <person name="Bult C."/>
            <person name="Grimmond S.M."/>
            <person name="Teasdale R.D."/>
            <person name="Liu E.T."/>
            <person name="Brusic V."/>
            <person name="Quackenbush J."/>
            <person name="Wahlestedt C."/>
            <person name="Mattick J.S."/>
            <person name="Hume D.A."/>
            <person name="Kai C."/>
            <person name="Sasaki D."/>
            <person name="Tomaru Y."/>
            <person name="Fukuda S."/>
            <person name="Kanamori-Katayama M."/>
            <person name="Suzuki M."/>
            <person name="Aoki J."/>
            <person name="Arakawa T."/>
            <person name="Iida J."/>
            <person name="Imamura K."/>
            <person name="Itoh M."/>
            <person name="Kato T."/>
            <person name="Kawaji H."/>
            <person name="Kawagashira N."/>
            <person name="Kawashima T."/>
            <person name="Kojima M."/>
            <person name="Kondo S."/>
            <person name="Konno H."/>
            <person name="Nakano K."/>
            <person name="Ninomiya N."/>
            <person name="Nishio T."/>
            <person name="Okada M."/>
            <person name="Plessy C."/>
            <person name="Shibata K."/>
            <person name="Shiraki T."/>
            <person name="Suzuki S."/>
            <person name="Tagami M."/>
            <person name="Waki K."/>
            <person name="Watahiki A."/>
            <person name="Okamura-Oho Y."/>
            <person name="Suzuki H."/>
            <person name="Kawai J."/>
            <person name="Hayashizaki Y."/>
        </authorList>
    </citation>
    <scope>NUCLEOTIDE SEQUENCE [LARGE SCALE MRNA]</scope>
    <source>
        <strain>C57BL/6J</strain>
        <strain>DBA/2J</strain>
        <tissue>Bone marrow</tissue>
        <tissue>Head</tissue>
        <tissue>Hippocampus</tissue>
        <tissue>Kidney</tissue>
        <tissue>Mammary gland</tissue>
        <tissue>Medulla oblongata</tissue>
        <tissue>Testis</tissue>
    </source>
</reference>
<reference key="5">
    <citation type="journal article" date="2004" name="Genome Res.">
        <title>The status, quality, and expansion of the NIH full-length cDNA project: the Mammalian Gene Collection (MGC).</title>
        <authorList>
            <consortium name="The MGC Project Team"/>
        </authorList>
    </citation>
    <scope>NUCLEOTIDE SEQUENCE [LARGE SCALE MRNA]</scope>
</reference>
<reference key="6">
    <citation type="journal article" date="2010" name="Cell">
        <title>A tissue-specific atlas of mouse protein phosphorylation and expression.</title>
        <authorList>
            <person name="Huttlin E.L."/>
            <person name="Jedrychowski M.P."/>
            <person name="Elias J.E."/>
            <person name="Goswami T."/>
            <person name="Rad R."/>
            <person name="Beausoleil S.A."/>
            <person name="Villen J."/>
            <person name="Haas W."/>
            <person name="Sowa M.E."/>
            <person name="Gygi S.P."/>
        </authorList>
    </citation>
    <scope>IDENTIFICATION BY MASS SPECTROMETRY [LARGE SCALE ANALYSIS]</scope>
    <source>
        <tissue>Brain</tissue>
        <tissue>Brown adipose tissue</tissue>
        <tissue>Heart</tissue>
        <tissue>Kidney</tissue>
        <tissue>Liver</tissue>
        <tissue>Lung</tissue>
        <tissue>Pancreas</tissue>
        <tissue>Spleen</tissue>
        <tissue>Testis</tissue>
    </source>
</reference>
<sequence>MASPLRSLLFLLAVLAVAWAATPKQGPRMLGAPEEADANEEGVRRALDFAVSEYNKGSNDAYHSRAIQVVRARKQLVAGVNYFLDVEMGRTTCTKSQTNLTDCPFHDQPHLMRKALCSFQIYSVPWKGTHSLTKFSCKNA</sequence>
<protein>
    <recommendedName>
        <fullName>Cystatin-C</fullName>
    </recommendedName>
    <alternativeName>
        <fullName>Cystatin-3</fullName>
    </alternativeName>
</protein>
<evidence type="ECO:0000250" key="1"/>
<evidence type="ECO:0000305" key="2"/>
<accession>P21460</accession>
<accession>Q544Y0</accession>
<gene>
    <name type="primary">Cst3</name>
</gene>
<dbReference type="EMBL" id="M59470">
    <property type="protein sequence ID" value="AAA63298.1"/>
    <property type="molecule type" value="mRNA"/>
</dbReference>
<dbReference type="EMBL" id="U10098">
    <property type="protein sequence ID" value="AAB41056.1"/>
    <property type="molecule type" value="Unassigned_DNA"/>
</dbReference>
<dbReference type="EMBL" id="AF483486">
    <property type="protein sequence ID" value="AAL90760.1"/>
    <property type="molecule type" value="mRNA"/>
</dbReference>
<dbReference type="EMBL" id="AF483487">
    <property type="protein sequence ID" value="AAL90761.1"/>
    <property type="molecule type" value="mRNA"/>
</dbReference>
<dbReference type="EMBL" id="AK002438">
    <property type="protein sequence ID" value="BAB22101.1"/>
    <property type="molecule type" value="mRNA"/>
</dbReference>
<dbReference type="EMBL" id="AK013676">
    <property type="protein sequence ID" value="BAB28949.1"/>
    <property type="molecule type" value="mRNA"/>
</dbReference>
<dbReference type="EMBL" id="AK014368">
    <property type="protein sequence ID" value="BAB29303.1"/>
    <property type="molecule type" value="mRNA"/>
</dbReference>
<dbReference type="EMBL" id="AK131728">
    <property type="protein sequence ID" value="BAE20785.1"/>
    <property type="molecule type" value="mRNA"/>
</dbReference>
<dbReference type="EMBL" id="AK146333">
    <property type="protein sequence ID" value="BAE27088.1"/>
    <property type="molecule type" value="mRNA"/>
</dbReference>
<dbReference type="EMBL" id="AK151160">
    <property type="protein sequence ID" value="BAE30165.1"/>
    <property type="molecule type" value="mRNA"/>
</dbReference>
<dbReference type="EMBL" id="AK161856">
    <property type="protein sequence ID" value="BAE36608.1"/>
    <property type="molecule type" value="mRNA"/>
</dbReference>
<dbReference type="EMBL" id="AK166430">
    <property type="protein sequence ID" value="BAE38771.1"/>
    <property type="molecule type" value="mRNA"/>
</dbReference>
<dbReference type="EMBL" id="BC002072">
    <property type="protein sequence ID" value="AAH02072.1"/>
    <property type="molecule type" value="mRNA"/>
</dbReference>
<dbReference type="CCDS" id="CCDS16852.1"/>
<dbReference type="PIR" id="A36163">
    <property type="entry name" value="A36163"/>
</dbReference>
<dbReference type="RefSeq" id="NP_034106.2">
    <property type="nucleotide sequence ID" value="NM_009976.4"/>
</dbReference>
<dbReference type="PDB" id="8V57">
    <property type="method" value="X-ray"/>
    <property type="resolution" value="2.75 A"/>
    <property type="chains" value="C/D=21-140"/>
</dbReference>
<dbReference type="PDBsum" id="8V57"/>
<dbReference type="SMR" id="P21460"/>
<dbReference type="BioGRID" id="198955">
    <property type="interactions" value="12"/>
</dbReference>
<dbReference type="FunCoup" id="P21460">
    <property type="interactions" value="180"/>
</dbReference>
<dbReference type="IntAct" id="P21460">
    <property type="interactions" value="3"/>
</dbReference>
<dbReference type="STRING" id="10090.ENSMUSP00000028938"/>
<dbReference type="MEROPS" id="I25.004"/>
<dbReference type="GlyConnect" id="2245">
    <property type="glycosylation" value="8 N-Linked glycans (1 site)"/>
</dbReference>
<dbReference type="GlyCosmos" id="P21460">
    <property type="glycosylation" value="1 site, 15 glycans"/>
</dbReference>
<dbReference type="GlyGen" id="P21460">
    <property type="glycosylation" value="2 sites, 9 N-linked glycans (1 site), 1 O-linked glycan (1 site)"/>
</dbReference>
<dbReference type="iPTMnet" id="P21460"/>
<dbReference type="PhosphoSitePlus" id="P21460"/>
<dbReference type="SwissPalm" id="P21460"/>
<dbReference type="CPTAC" id="non-CPTAC-3702"/>
<dbReference type="jPOST" id="P21460"/>
<dbReference type="PaxDb" id="10090-ENSMUSP00000028938"/>
<dbReference type="PeptideAtlas" id="P21460"/>
<dbReference type="ProteomicsDB" id="285407"/>
<dbReference type="DNASU" id="13010"/>
<dbReference type="Ensembl" id="ENSMUST00000028938.7">
    <property type="protein sequence ID" value="ENSMUSP00000028938.7"/>
    <property type="gene ID" value="ENSMUSG00000027447.7"/>
</dbReference>
<dbReference type="GeneID" id="13010"/>
<dbReference type="KEGG" id="mmu:13010"/>
<dbReference type="UCSC" id="uc008mtt.1">
    <property type="organism name" value="mouse"/>
</dbReference>
<dbReference type="AGR" id="MGI:102519"/>
<dbReference type="CTD" id="1471"/>
<dbReference type="MGI" id="MGI:102519">
    <property type="gene designation" value="Cst3"/>
</dbReference>
<dbReference type="VEuPathDB" id="HostDB:ENSMUSG00000027447"/>
<dbReference type="eggNOG" id="ENOG502SC50">
    <property type="taxonomic scope" value="Eukaryota"/>
</dbReference>
<dbReference type="GeneTree" id="ENSGT00940000154755"/>
<dbReference type="InParanoid" id="P21460"/>
<dbReference type="OMA" id="VKSSCQD"/>
<dbReference type="OrthoDB" id="1908104at2759"/>
<dbReference type="PhylomeDB" id="P21460"/>
<dbReference type="Reactome" id="R-MMU-381426">
    <property type="pathway name" value="Regulation of Insulin-like Growth Factor (IGF) transport and uptake by Insulin-like Growth Factor Binding Proteins (IGFBPs)"/>
</dbReference>
<dbReference type="Reactome" id="R-MMU-6798695">
    <property type="pathway name" value="Neutrophil degranulation"/>
</dbReference>
<dbReference type="Reactome" id="R-MMU-8957275">
    <property type="pathway name" value="Post-translational protein phosphorylation"/>
</dbReference>
<dbReference type="BioGRID-ORCS" id="13010">
    <property type="hits" value="2 hits in 77 CRISPR screens"/>
</dbReference>
<dbReference type="ChiTaRS" id="Cst3">
    <property type="organism name" value="mouse"/>
</dbReference>
<dbReference type="PRO" id="PR:P21460"/>
<dbReference type="Proteomes" id="UP000000589">
    <property type="component" value="Chromosome 2"/>
</dbReference>
<dbReference type="RNAct" id="P21460">
    <property type="molecule type" value="protein"/>
</dbReference>
<dbReference type="Bgee" id="ENSMUSG00000027447">
    <property type="expression patterns" value="Expressed in skin of external ear and 270 other cell types or tissues"/>
</dbReference>
<dbReference type="ExpressionAtlas" id="P21460">
    <property type="expression patterns" value="baseline and differential"/>
</dbReference>
<dbReference type="GO" id="GO:0030424">
    <property type="term" value="C:axon"/>
    <property type="evidence" value="ECO:0007669"/>
    <property type="project" value="Ensembl"/>
</dbReference>
<dbReference type="GO" id="GO:0005604">
    <property type="term" value="C:basement membrane"/>
    <property type="evidence" value="ECO:0007669"/>
    <property type="project" value="Ensembl"/>
</dbReference>
<dbReference type="GO" id="GO:0062023">
    <property type="term" value="C:collagen-containing extracellular matrix"/>
    <property type="evidence" value="ECO:0007005"/>
    <property type="project" value="BHF-UCL"/>
</dbReference>
<dbReference type="GO" id="GO:0043292">
    <property type="term" value="C:contractile muscle fiber"/>
    <property type="evidence" value="ECO:0007669"/>
    <property type="project" value="Ensembl"/>
</dbReference>
<dbReference type="GO" id="GO:0005615">
    <property type="term" value="C:extracellular space"/>
    <property type="evidence" value="ECO:0007005"/>
    <property type="project" value="BHF-UCL"/>
</dbReference>
<dbReference type="GO" id="GO:0005771">
    <property type="term" value="C:multivesicular body"/>
    <property type="evidence" value="ECO:0007669"/>
    <property type="project" value="Ensembl"/>
</dbReference>
<dbReference type="GO" id="GO:0043025">
    <property type="term" value="C:neuronal cell body"/>
    <property type="evidence" value="ECO:0007669"/>
    <property type="project" value="Ensembl"/>
</dbReference>
<dbReference type="GO" id="GO:0031965">
    <property type="term" value="C:nuclear membrane"/>
    <property type="evidence" value="ECO:0007669"/>
    <property type="project" value="Ensembl"/>
</dbReference>
<dbReference type="GO" id="GO:0048471">
    <property type="term" value="C:perinuclear region of cytoplasm"/>
    <property type="evidence" value="ECO:0007669"/>
    <property type="project" value="Ensembl"/>
</dbReference>
<dbReference type="GO" id="GO:0004869">
    <property type="term" value="F:cysteine-type endopeptidase inhibitor activity"/>
    <property type="evidence" value="ECO:0007669"/>
    <property type="project" value="UniProtKB-KW"/>
</dbReference>
<dbReference type="GO" id="GO:0002020">
    <property type="term" value="F:protease binding"/>
    <property type="evidence" value="ECO:0007669"/>
    <property type="project" value="Ensembl"/>
</dbReference>
<dbReference type="GO" id="GO:0070301">
    <property type="term" value="P:cellular response to hydrogen peroxide"/>
    <property type="evidence" value="ECO:0007669"/>
    <property type="project" value="Ensembl"/>
</dbReference>
<dbReference type="GO" id="GO:0007566">
    <property type="term" value="P:embryo implantation"/>
    <property type="evidence" value="ECO:0007669"/>
    <property type="project" value="Ensembl"/>
</dbReference>
<dbReference type="GO" id="GO:0001654">
    <property type="term" value="P:eye development"/>
    <property type="evidence" value="ECO:0007669"/>
    <property type="project" value="Ensembl"/>
</dbReference>
<dbReference type="GO" id="GO:0008284">
    <property type="term" value="P:positive regulation of cell population proliferation"/>
    <property type="evidence" value="ECO:0007669"/>
    <property type="project" value="Ensembl"/>
</dbReference>
<dbReference type="GO" id="GO:0045740">
    <property type="term" value="P:positive regulation of DNA replication"/>
    <property type="evidence" value="ECO:0007669"/>
    <property type="project" value="Ensembl"/>
</dbReference>
<dbReference type="GO" id="GO:0048678">
    <property type="term" value="P:response to axon injury"/>
    <property type="evidence" value="ECO:0007669"/>
    <property type="project" value="Ensembl"/>
</dbReference>
<dbReference type="GO" id="GO:0009743">
    <property type="term" value="P:response to carbohydrate"/>
    <property type="evidence" value="ECO:0007669"/>
    <property type="project" value="Ensembl"/>
</dbReference>
<dbReference type="GO" id="GO:0032355">
    <property type="term" value="P:response to estradiol"/>
    <property type="evidence" value="ECO:0007669"/>
    <property type="project" value="Ensembl"/>
</dbReference>
<dbReference type="GO" id="GO:0001666">
    <property type="term" value="P:response to hypoxia"/>
    <property type="evidence" value="ECO:0007669"/>
    <property type="project" value="Ensembl"/>
</dbReference>
<dbReference type="GO" id="GO:0031667">
    <property type="term" value="P:response to nutrient levels"/>
    <property type="evidence" value="ECO:0007669"/>
    <property type="project" value="Ensembl"/>
</dbReference>
<dbReference type="GO" id="GO:0009636">
    <property type="term" value="P:response to toxic substance"/>
    <property type="evidence" value="ECO:0007669"/>
    <property type="project" value="Ensembl"/>
</dbReference>
<dbReference type="GO" id="GO:0009410">
    <property type="term" value="P:response to xenobiotic stimulus"/>
    <property type="evidence" value="ECO:0007669"/>
    <property type="project" value="Ensembl"/>
</dbReference>
<dbReference type="GO" id="GO:0007431">
    <property type="term" value="P:salivary gland development"/>
    <property type="evidence" value="ECO:0007669"/>
    <property type="project" value="Ensembl"/>
</dbReference>
<dbReference type="GO" id="GO:0060009">
    <property type="term" value="P:Sertoli cell development"/>
    <property type="evidence" value="ECO:0007669"/>
    <property type="project" value="Ensembl"/>
</dbReference>
<dbReference type="CDD" id="cd00042">
    <property type="entry name" value="CY"/>
    <property type="match status" value="1"/>
</dbReference>
<dbReference type="FunFam" id="3.10.450.10:FF:000004">
    <property type="entry name" value="Cystatin C"/>
    <property type="match status" value="1"/>
</dbReference>
<dbReference type="Gene3D" id="3.10.450.10">
    <property type="match status" value="1"/>
</dbReference>
<dbReference type="InterPro" id="IPR000010">
    <property type="entry name" value="Cystatin_dom"/>
</dbReference>
<dbReference type="InterPro" id="IPR046350">
    <property type="entry name" value="Cystatin_sf"/>
</dbReference>
<dbReference type="InterPro" id="IPR018073">
    <property type="entry name" value="Prot_inh_cystat_CS"/>
</dbReference>
<dbReference type="PANTHER" id="PTHR46186">
    <property type="entry name" value="CYSTATIN"/>
    <property type="match status" value="1"/>
</dbReference>
<dbReference type="PANTHER" id="PTHR46186:SF6">
    <property type="entry name" value="CYSTATIN-C"/>
    <property type="match status" value="1"/>
</dbReference>
<dbReference type="Pfam" id="PF00031">
    <property type="entry name" value="Cystatin"/>
    <property type="match status" value="1"/>
</dbReference>
<dbReference type="SMART" id="SM00043">
    <property type="entry name" value="CY"/>
    <property type="match status" value="1"/>
</dbReference>
<dbReference type="SUPFAM" id="SSF54403">
    <property type="entry name" value="Cystatin/monellin"/>
    <property type="match status" value="1"/>
</dbReference>
<dbReference type="PROSITE" id="PS00287">
    <property type="entry name" value="CYSTATIN"/>
    <property type="match status" value="1"/>
</dbReference>
<feature type="signal peptide">
    <location>
        <begin position="1"/>
        <end position="20"/>
    </location>
</feature>
<feature type="chain" id="PRO_0000006642" description="Cystatin-C">
    <location>
        <begin position="21"/>
        <end position="140"/>
    </location>
</feature>
<feature type="short sequence motif" description="Secondary area of contact">
    <location>
        <begin position="75"/>
        <end position="79"/>
    </location>
</feature>
<feature type="site" description="Reactive site">
    <location>
        <position position="31"/>
    </location>
</feature>
<feature type="disulfide bond" evidence="1">
    <location>
        <begin position="93"/>
        <end position="103"/>
    </location>
</feature>
<feature type="disulfide bond" evidence="1">
    <location>
        <begin position="117"/>
        <end position="137"/>
    </location>
</feature>
<feature type="sequence conflict" description="In Ref. 1; AAA63298." evidence="2" ref="1">
    <original>A</original>
    <variation>G</variation>
    <location>
        <position position="16"/>
    </location>
</feature>
<feature type="sequence conflict" description="In Ref. 1; AAA63298." evidence="2" ref="1">
    <original>L</original>
    <variation>F</variation>
    <location>
        <position position="84"/>
    </location>
</feature>
<proteinExistence type="evidence at protein level"/>
<comment type="function">
    <text>As an inhibitor of cysteine proteinases, this protein is thought to serve an important physiological role as a local regulator of this enzyme activity.</text>
</comment>
<comment type="subcellular location">
    <subcellularLocation>
        <location evidence="1">Secreted</location>
    </subcellularLocation>
</comment>
<comment type="similarity">
    <text evidence="2">Belongs to the cystatin family.</text>
</comment>